<gene>
    <name type="primary">COMT</name>
</gene>
<keyword id="KW-0024">Alternative initiation</keyword>
<keyword id="KW-0128">Catecholamine metabolism</keyword>
<keyword id="KW-1003">Cell membrane</keyword>
<keyword id="KW-0963">Cytoplasm</keyword>
<keyword id="KW-0443">Lipid metabolism</keyword>
<keyword id="KW-0460">Magnesium</keyword>
<keyword id="KW-0472">Membrane</keyword>
<keyword id="KW-0479">Metal-binding</keyword>
<keyword id="KW-0489">Methyltransferase</keyword>
<keyword id="KW-0531">Neurotransmitter degradation</keyword>
<keyword id="KW-0597">Phosphoprotein</keyword>
<keyword id="KW-1185">Reference proteome</keyword>
<keyword id="KW-0949">S-adenosyl-L-methionine</keyword>
<keyword id="KW-0735">Signal-anchor</keyword>
<keyword id="KW-0808">Transferase</keyword>
<keyword id="KW-0812">Transmembrane</keyword>
<keyword id="KW-1133">Transmembrane helix</keyword>
<feature type="chain" id="PRO_0000318146" description="Catechol O-methyltransferase">
    <location>
        <begin position="1"/>
        <end position="272"/>
    </location>
</feature>
<feature type="topological domain" description="Cytoplasmic" evidence="4">
    <location>
        <begin position="1"/>
        <end position="6"/>
    </location>
</feature>
<feature type="transmembrane region" description="Helical; Signal-anchor for type II membrane protein" evidence="4">
    <location>
        <begin position="7"/>
        <end position="27"/>
    </location>
</feature>
<feature type="topological domain" description="Extracellular" evidence="4">
    <location>
        <begin position="28"/>
        <end position="272"/>
    </location>
</feature>
<feature type="binding site" evidence="5">
    <location>
        <position position="93"/>
    </location>
    <ligand>
        <name>S-adenosyl-L-methionine</name>
        <dbReference type="ChEBI" id="CHEBI:59789"/>
    </ligand>
</feature>
<feature type="binding site" evidence="5">
    <location>
        <position position="115"/>
    </location>
    <ligand>
        <name>S-adenosyl-L-methionine</name>
        <dbReference type="ChEBI" id="CHEBI:59789"/>
    </ligand>
</feature>
<feature type="binding site" evidence="5">
    <location>
        <position position="123"/>
    </location>
    <ligand>
        <name>S-adenosyl-L-methionine</name>
        <dbReference type="ChEBI" id="CHEBI:59789"/>
    </ligand>
</feature>
<feature type="binding site" evidence="5">
    <location>
        <position position="141"/>
    </location>
    <ligand>
        <name>S-adenosyl-L-methionine</name>
        <dbReference type="ChEBI" id="CHEBI:59789"/>
    </ligand>
</feature>
<feature type="binding site" evidence="5">
    <location>
        <begin position="168"/>
        <end position="171"/>
    </location>
    <ligand>
        <name>S-adenosyl-L-methionine</name>
        <dbReference type="ChEBI" id="CHEBI:59789"/>
    </ligand>
</feature>
<feature type="binding site" evidence="5">
    <location>
        <position position="170"/>
    </location>
    <ligand>
        <name>S-adenosyl-L-methionine</name>
        <dbReference type="ChEBI" id="CHEBI:59789"/>
    </ligand>
</feature>
<feature type="binding site" evidence="1">
    <location>
        <position position="192"/>
    </location>
    <ligand>
        <name>Mg(2+)</name>
        <dbReference type="ChEBI" id="CHEBI:18420"/>
    </ligand>
</feature>
<feature type="binding site" evidence="5">
    <location>
        <position position="192"/>
    </location>
    <ligand>
        <name>S-adenosyl-L-methionine</name>
        <dbReference type="ChEBI" id="CHEBI:59789"/>
    </ligand>
</feature>
<feature type="binding site" evidence="1">
    <location>
        <position position="195"/>
    </location>
    <ligand>
        <name>substrate</name>
    </ligand>
</feature>
<feature type="binding site" evidence="1">
    <location>
        <position position="220"/>
    </location>
    <ligand>
        <name>Mg(2+)</name>
        <dbReference type="ChEBI" id="CHEBI:18420"/>
    </ligand>
</feature>
<feature type="binding site" evidence="1">
    <location>
        <position position="221"/>
    </location>
    <ligand>
        <name>Mg(2+)</name>
        <dbReference type="ChEBI" id="CHEBI:18420"/>
    </ligand>
</feature>
<feature type="binding site" evidence="1">
    <location>
        <position position="221"/>
    </location>
    <ligand>
        <name>substrate</name>
    </ligand>
</feature>
<feature type="binding site" evidence="1">
    <location>
        <position position="250"/>
    </location>
    <ligand>
        <name>substrate</name>
    </ligand>
</feature>
<feature type="modified residue" description="Phosphoserine" evidence="3">
    <location>
        <position position="267"/>
    </location>
</feature>
<feature type="splice variant" id="VSP_031175" description="In isoform Soluble." evidence="6">
    <location>
        <begin position="1"/>
        <end position="51"/>
    </location>
</feature>
<dbReference type="EC" id="2.1.1.6" evidence="2"/>
<dbReference type="EMBL" id="BC151585">
    <property type="protein sequence ID" value="AAI51586.1"/>
    <property type="molecule type" value="mRNA"/>
</dbReference>
<dbReference type="RefSeq" id="NP_001095787.1">
    <molecule id="A7MBI7-1"/>
    <property type="nucleotide sequence ID" value="NM_001102317.1"/>
</dbReference>
<dbReference type="SMR" id="A7MBI7"/>
<dbReference type="FunCoup" id="A7MBI7">
    <property type="interactions" value="1078"/>
</dbReference>
<dbReference type="STRING" id="9913.ENSBTAP00000025997"/>
<dbReference type="PaxDb" id="9913-ENSBTAP00000025997"/>
<dbReference type="PeptideAtlas" id="A7MBI7"/>
<dbReference type="GeneID" id="618278"/>
<dbReference type="KEGG" id="bta:618278"/>
<dbReference type="CTD" id="1312"/>
<dbReference type="VEuPathDB" id="HostDB:ENSBTAG00000019516"/>
<dbReference type="eggNOG" id="KOG1663">
    <property type="taxonomic scope" value="Eukaryota"/>
</dbReference>
<dbReference type="HOGENOM" id="CLU_050461_3_2_1"/>
<dbReference type="InParanoid" id="A7MBI7"/>
<dbReference type="OrthoDB" id="186626at2759"/>
<dbReference type="Reactome" id="R-BTA-156581">
    <property type="pathway name" value="Methylation"/>
</dbReference>
<dbReference type="Reactome" id="R-BTA-379397">
    <property type="pathway name" value="Enzymatic degradation of dopamine by COMT"/>
</dbReference>
<dbReference type="Reactome" id="R-BTA-379398">
    <property type="pathway name" value="Enzymatic degradation of Dopamine by monoamine oxidase"/>
</dbReference>
<dbReference type="Proteomes" id="UP000009136">
    <property type="component" value="Chromosome 17"/>
</dbReference>
<dbReference type="Bgee" id="ENSBTAG00000019516">
    <property type="expression patterns" value="Expressed in liver and 104 other cell types or tissues"/>
</dbReference>
<dbReference type="GO" id="GO:0030424">
    <property type="term" value="C:axon"/>
    <property type="evidence" value="ECO:0000318"/>
    <property type="project" value="GO_Central"/>
</dbReference>
<dbReference type="GO" id="GO:0005829">
    <property type="term" value="C:cytosol"/>
    <property type="evidence" value="ECO:0000250"/>
    <property type="project" value="UniProtKB"/>
</dbReference>
<dbReference type="GO" id="GO:0030425">
    <property type="term" value="C:dendrite"/>
    <property type="evidence" value="ECO:0000318"/>
    <property type="project" value="GO_Central"/>
</dbReference>
<dbReference type="GO" id="GO:0016020">
    <property type="term" value="C:membrane"/>
    <property type="evidence" value="ECO:0000318"/>
    <property type="project" value="GO_Central"/>
</dbReference>
<dbReference type="GO" id="GO:0005886">
    <property type="term" value="C:plasma membrane"/>
    <property type="evidence" value="ECO:0007669"/>
    <property type="project" value="UniProtKB-SubCell"/>
</dbReference>
<dbReference type="GO" id="GO:0016206">
    <property type="term" value="F:catechol O-methyltransferase activity"/>
    <property type="evidence" value="ECO:0000250"/>
    <property type="project" value="UniProtKB"/>
</dbReference>
<dbReference type="GO" id="GO:0000287">
    <property type="term" value="F:magnesium ion binding"/>
    <property type="evidence" value="ECO:0007669"/>
    <property type="project" value="InterPro"/>
</dbReference>
<dbReference type="GO" id="GO:0042424">
    <property type="term" value="P:catecholamine catabolic process"/>
    <property type="evidence" value="ECO:0000250"/>
    <property type="project" value="UniProtKB"/>
</dbReference>
<dbReference type="GO" id="GO:0032502">
    <property type="term" value="P:developmental process"/>
    <property type="evidence" value="ECO:0000318"/>
    <property type="project" value="GO_Central"/>
</dbReference>
<dbReference type="GO" id="GO:0042417">
    <property type="term" value="P:dopamine metabolic process"/>
    <property type="evidence" value="ECO:0000318"/>
    <property type="project" value="GO_Central"/>
</dbReference>
<dbReference type="GO" id="GO:0006629">
    <property type="term" value="P:lipid metabolic process"/>
    <property type="evidence" value="ECO:0007669"/>
    <property type="project" value="UniProtKB-KW"/>
</dbReference>
<dbReference type="GO" id="GO:0032259">
    <property type="term" value="P:methylation"/>
    <property type="evidence" value="ECO:0000250"/>
    <property type="project" value="UniProtKB"/>
</dbReference>
<dbReference type="CDD" id="cd02440">
    <property type="entry name" value="AdoMet_MTases"/>
    <property type="match status" value="1"/>
</dbReference>
<dbReference type="FunFam" id="3.40.50.150:FF:000054">
    <property type="entry name" value="Catechol O-methyltransferase"/>
    <property type="match status" value="1"/>
</dbReference>
<dbReference type="Gene3D" id="3.40.50.150">
    <property type="entry name" value="Vaccinia Virus protein VP39"/>
    <property type="match status" value="1"/>
</dbReference>
<dbReference type="InterPro" id="IPR017128">
    <property type="entry name" value="Catechol_O-MeTrfase_euk"/>
</dbReference>
<dbReference type="InterPro" id="IPR029063">
    <property type="entry name" value="SAM-dependent_MTases_sf"/>
</dbReference>
<dbReference type="InterPro" id="IPR002935">
    <property type="entry name" value="SAM_O-MeTrfase"/>
</dbReference>
<dbReference type="PANTHER" id="PTHR43836:SF3">
    <property type="entry name" value="CATECHOL O-METHYLTRANSFERASE"/>
    <property type="match status" value="1"/>
</dbReference>
<dbReference type="PANTHER" id="PTHR43836">
    <property type="entry name" value="CATECHOL O-METHYLTRANSFERASE 1-RELATED"/>
    <property type="match status" value="1"/>
</dbReference>
<dbReference type="Pfam" id="PF01596">
    <property type="entry name" value="Methyltransf_3"/>
    <property type="match status" value="1"/>
</dbReference>
<dbReference type="PIRSF" id="PIRSF037177">
    <property type="entry name" value="Catechol_O-mtfrase_euk"/>
    <property type="match status" value="1"/>
</dbReference>
<dbReference type="SUPFAM" id="SSF53335">
    <property type="entry name" value="S-adenosyl-L-methionine-dependent methyltransferases"/>
    <property type="match status" value="1"/>
</dbReference>
<dbReference type="PROSITE" id="PS51682">
    <property type="entry name" value="SAM_OMT_I"/>
    <property type="match status" value="1"/>
</dbReference>
<protein>
    <recommendedName>
        <fullName>Catechol O-methyltransferase</fullName>
        <ecNumber evidence="2">2.1.1.6</ecNumber>
    </recommendedName>
</protein>
<organism>
    <name type="scientific">Bos taurus</name>
    <name type="common">Bovine</name>
    <dbReference type="NCBI Taxonomy" id="9913"/>
    <lineage>
        <taxon>Eukaryota</taxon>
        <taxon>Metazoa</taxon>
        <taxon>Chordata</taxon>
        <taxon>Craniata</taxon>
        <taxon>Vertebrata</taxon>
        <taxon>Euteleostomi</taxon>
        <taxon>Mammalia</taxon>
        <taxon>Eutheria</taxon>
        <taxon>Laurasiatheria</taxon>
        <taxon>Artiodactyla</taxon>
        <taxon>Ruminantia</taxon>
        <taxon>Pecora</taxon>
        <taxon>Bovidae</taxon>
        <taxon>Bovinae</taxon>
        <taxon>Bos</taxon>
    </lineage>
</organism>
<sequence length="272" mass="30485">MLEAPPLLLVAGGVGLALLALRWLATTDLQFFGRAFIVWNEFIMKPIRNLLMGSSKEQRILQHVLQHAVAGDPQSVVAAIDSYSLEKEWAMHVGEKKGQIVDRVLREQQPSVLLELGAYCGYSAVRMARLLLPGARLLTIEFNPDYAAITQRMVEFAGLQDKVTVVLGASQDIIPQLKKKYDVDTLDMVFLDHWKDRYLPDMLLLEECGLLREGTVLLADNVIYPGAPDFLEYVRGNSRFECSHFSSYLEYSKVVDGLEKVVYKGLSGPARP</sequence>
<proteinExistence type="evidence at transcript level"/>
<accession>A7MBI7</accession>
<evidence type="ECO:0000250" key="1"/>
<evidence type="ECO:0000250" key="2">
    <source>
        <dbReference type="UniProtKB" id="P21964"/>
    </source>
</evidence>
<evidence type="ECO:0000250" key="3">
    <source>
        <dbReference type="UniProtKB" id="P22734"/>
    </source>
</evidence>
<evidence type="ECO:0000255" key="4"/>
<evidence type="ECO:0000255" key="5">
    <source>
        <dbReference type="PROSITE-ProRule" id="PRU01019"/>
    </source>
</evidence>
<evidence type="ECO:0000305" key="6"/>
<comment type="function">
    <text evidence="2">Catalyzes the O-methylation, and thereby the inactivation, of catecholamine neurotransmitters and catechol hormones. Also shortens the biological half-lives of certain neuroactive drugs, like L-DOPA, alpha-methyl DOPA and isoproterenol.</text>
</comment>
<comment type="catalytic activity">
    <reaction evidence="2">
        <text>a catechol + S-adenosyl-L-methionine = a guaiacol + S-adenosyl-L-homocysteine + H(+)</text>
        <dbReference type="Rhea" id="RHEA:17877"/>
        <dbReference type="ChEBI" id="CHEBI:15378"/>
        <dbReference type="ChEBI" id="CHEBI:33566"/>
        <dbReference type="ChEBI" id="CHEBI:57856"/>
        <dbReference type="ChEBI" id="CHEBI:59789"/>
        <dbReference type="ChEBI" id="CHEBI:134251"/>
        <dbReference type="EC" id="2.1.1.6"/>
    </reaction>
    <physiologicalReaction direction="left-to-right" evidence="2">
        <dbReference type="Rhea" id="RHEA:17878"/>
    </physiologicalReaction>
</comment>
<comment type="catalytic activity">
    <reaction evidence="2">
        <text>2-hydroxyestrone + S-adenosyl-L-methionine = 2-hydroxy-3-methoxy-estrone + S-adenosyl-L-homocysteine + H(+)</text>
        <dbReference type="Rhea" id="RHEA:53108"/>
        <dbReference type="ChEBI" id="CHEBI:1156"/>
        <dbReference type="ChEBI" id="CHEBI:15378"/>
        <dbReference type="ChEBI" id="CHEBI:57856"/>
        <dbReference type="ChEBI" id="CHEBI:59789"/>
        <dbReference type="ChEBI" id="CHEBI:136980"/>
    </reaction>
    <physiologicalReaction direction="left-to-right" evidence="2">
        <dbReference type="Rhea" id="RHEA:53109"/>
    </physiologicalReaction>
</comment>
<comment type="catalytic activity">
    <reaction evidence="2">
        <text>4-hydroxyestrone + S-adenosyl-L-methionine = 4-methoxyestrone + S-adenosyl-L-homocysteine + H(+)</text>
        <dbReference type="Rhea" id="RHEA:53104"/>
        <dbReference type="ChEBI" id="CHEBI:15378"/>
        <dbReference type="ChEBI" id="CHEBI:57856"/>
        <dbReference type="ChEBI" id="CHEBI:59789"/>
        <dbReference type="ChEBI" id="CHEBI:87602"/>
        <dbReference type="ChEBI" id="CHEBI:136972"/>
    </reaction>
    <physiologicalReaction direction="left-to-right" evidence="2">
        <dbReference type="Rhea" id="RHEA:53105"/>
    </physiologicalReaction>
</comment>
<comment type="catalytic activity">
    <reaction evidence="2">
        <text>2-hydroxyestrone + S-adenosyl-L-methionine = 2-methoxyestrone + S-adenosyl-L-homocysteine + H(+)</text>
        <dbReference type="Rhea" id="RHEA:53100"/>
        <dbReference type="ChEBI" id="CHEBI:1156"/>
        <dbReference type="ChEBI" id="CHEBI:1189"/>
        <dbReference type="ChEBI" id="CHEBI:15378"/>
        <dbReference type="ChEBI" id="CHEBI:57856"/>
        <dbReference type="ChEBI" id="CHEBI:59789"/>
    </reaction>
    <physiologicalReaction direction="left-to-right" evidence="2">
        <dbReference type="Rhea" id="RHEA:53101"/>
    </physiologicalReaction>
</comment>
<comment type="catalytic activity">
    <reaction evidence="2">
        <text>4-hydroxy-17beta-estradiol + S-adenosyl-L-methionine = 4-methoxy-17beta-estradiol + S-adenosyl-L-homocysteine + H(+)</text>
        <dbReference type="Rhea" id="RHEA:53096"/>
        <dbReference type="ChEBI" id="CHEBI:15378"/>
        <dbReference type="ChEBI" id="CHEBI:57856"/>
        <dbReference type="ChEBI" id="CHEBI:59789"/>
        <dbReference type="ChEBI" id="CHEBI:62845"/>
        <dbReference type="ChEBI" id="CHEBI:136975"/>
    </reaction>
    <physiologicalReaction direction="left-to-right" evidence="2">
        <dbReference type="Rhea" id="RHEA:53097"/>
    </physiologicalReaction>
</comment>
<comment type="catalytic activity">
    <reaction evidence="2">
        <text>2-hydroxy-17beta-estradiol + S-adenosyl-L-methionine = 2-hydroxy-3-methoxy-17beta-estradiol + S-adenosyl-L-homocysteine + H(+)</text>
        <dbReference type="Rhea" id="RHEA:53092"/>
        <dbReference type="ChEBI" id="CHEBI:15378"/>
        <dbReference type="ChEBI" id="CHEBI:28744"/>
        <dbReference type="ChEBI" id="CHEBI:57856"/>
        <dbReference type="ChEBI" id="CHEBI:59789"/>
        <dbReference type="ChEBI" id="CHEBI:89268"/>
    </reaction>
    <physiologicalReaction direction="left-to-right" evidence="2">
        <dbReference type="Rhea" id="RHEA:53093"/>
    </physiologicalReaction>
</comment>
<comment type="catalytic activity">
    <reaction evidence="2">
        <text>2-hydroxy-17beta-estradiol + S-adenosyl-L-methionine = 2-methoxy-17beta-estradiol + S-adenosyl-L-homocysteine + H(+)</text>
        <dbReference type="Rhea" id="RHEA:53088"/>
        <dbReference type="ChEBI" id="CHEBI:15378"/>
        <dbReference type="ChEBI" id="CHEBI:28744"/>
        <dbReference type="ChEBI" id="CHEBI:28955"/>
        <dbReference type="ChEBI" id="CHEBI:57856"/>
        <dbReference type="ChEBI" id="CHEBI:59789"/>
    </reaction>
    <physiologicalReaction direction="left-to-right" evidence="2">
        <dbReference type="Rhea" id="RHEA:53089"/>
    </physiologicalReaction>
</comment>
<comment type="cofactor">
    <cofactor evidence="3">
        <name>Mg(2+)</name>
        <dbReference type="ChEBI" id="CHEBI:18420"/>
    </cofactor>
    <text evidence="3">Binds 1 Mg(2+) ion per subunit.</text>
</comment>
<comment type="subcellular location">
    <molecule>Isoform Soluble</molecule>
    <subcellularLocation>
        <location evidence="3">Cytoplasm</location>
    </subcellularLocation>
</comment>
<comment type="subcellular location">
    <molecule>Isoform Membrane-bound</molecule>
    <subcellularLocation>
        <location evidence="3">Cell membrane</location>
        <topology evidence="4">Single-pass type II membrane protein</topology>
        <orientation evidence="3">Extracellular side</orientation>
    </subcellularLocation>
</comment>
<comment type="alternative products">
    <event type="alternative initiation"/>
    <isoform>
        <id>A7MBI7-1</id>
        <name>Membrane-bound</name>
        <name>MB-COMT</name>
        <sequence type="displayed"/>
    </isoform>
    <isoform>
        <id>A7MBI7-2</id>
        <name>Soluble</name>
        <name>S-COMT</name>
        <sequence type="described" ref="VSP_031175"/>
    </isoform>
</comment>
<comment type="similarity">
    <text evidence="5">Belongs to the class I-like SAM-binding methyltransferase superfamily. Cation-dependent O-methyltransferase family.</text>
</comment>
<name>COMT_BOVIN</name>
<reference key="1">
    <citation type="submission" date="2007-07" db="EMBL/GenBank/DDBJ databases">
        <authorList>
            <consortium name="NIH - Mammalian Gene Collection (MGC) project"/>
        </authorList>
    </citation>
    <scope>NUCLEOTIDE SEQUENCE [LARGE SCALE MRNA]</scope>
    <source>
        <strain>Hereford</strain>
        <tissue>Thymus</tissue>
    </source>
</reference>